<name>RPOA_CLOK5</name>
<feature type="chain" id="PRO_1000075006" description="DNA-directed RNA polymerase subunit alpha">
    <location>
        <begin position="1"/>
        <end position="315"/>
    </location>
</feature>
<feature type="region of interest" description="Alpha N-terminal domain (alpha-NTD)" evidence="1">
    <location>
        <begin position="1"/>
        <end position="228"/>
    </location>
</feature>
<feature type="region of interest" description="Alpha C-terminal domain (alpha-CTD)" evidence="1">
    <location>
        <begin position="245"/>
        <end position="315"/>
    </location>
</feature>
<proteinExistence type="inferred from homology"/>
<organism>
    <name type="scientific">Clostridium kluyveri (strain ATCC 8527 / DSM 555 / NBRC 12016 / NCIMB 10680 / K1)</name>
    <dbReference type="NCBI Taxonomy" id="431943"/>
    <lineage>
        <taxon>Bacteria</taxon>
        <taxon>Bacillati</taxon>
        <taxon>Bacillota</taxon>
        <taxon>Clostridia</taxon>
        <taxon>Eubacteriales</taxon>
        <taxon>Clostridiaceae</taxon>
        <taxon>Clostridium</taxon>
    </lineage>
</organism>
<evidence type="ECO:0000255" key="1">
    <source>
        <dbReference type="HAMAP-Rule" id="MF_00059"/>
    </source>
</evidence>
<comment type="function">
    <text evidence="1">DNA-dependent RNA polymerase catalyzes the transcription of DNA into RNA using the four ribonucleoside triphosphates as substrates.</text>
</comment>
<comment type="catalytic activity">
    <reaction evidence="1">
        <text>RNA(n) + a ribonucleoside 5'-triphosphate = RNA(n+1) + diphosphate</text>
        <dbReference type="Rhea" id="RHEA:21248"/>
        <dbReference type="Rhea" id="RHEA-COMP:14527"/>
        <dbReference type="Rhea" id="RHEA-COMP:17342"/>
        <dbReference type="ChEBI" id="CHEBI:33019"/>
        <dbReference type="ChEBI" id="CHEBI:61557"/>
        <dbReference type="ChEBI" id="CHEBI:140395"/>
        <dbReference type="EC" id="2.7.7.6"/>
    </reaction>
</comment>
<comment type="subunit">
    <text evidence="1">Homodimer. The RNAP catalytic core consists of 2 alpha, 1 beta, 1 beta' and 1 omega subunit. When a sigma factor is associated with the core the holoenzyme is formed, which can initiate transcription.</text>
</comment>
<comment type="domain">
    <text evidence="1">The N-terminal domain is essential for RNAP assembly and basal transcription, whereas the C-terminal domain is involved in interaction with transcriptional regulators and with upstream promoter elements.</text>
</comment>
<comment type="similarity">
    <text evidence="1">Belongs to the RNA polymerase alpha chain family.</text>
</comment>
<protein>
    <recommendedName>
        <fullName evidence="1">DNA-directed RNA polymerase subunit alpha</fullName>
        <shortName evidence="1">RNAP subunit alpha</shortName>
        <ecNumber evidence="1">2.7.7.6</ecNumber>
    </recommendedName>
    <alternativeName>
        <fullName evidence="1">RNA polymerase subunit alpha</fullName>
    </alternativeName>
    <alternativeName>
        <fullName evidence="1">Transcriptase subunit alpha</fullName>
    </alternativeName>
</protein>
<dbReference type="EC" id="2.7.7.6" evidence="1"/>
<dbReference type="EMBL" id="CP000673">
    <property type="protein sequence ID" value="EDK32306.1"/>
    <property type="molecule type" value="Genomic_DNA"/>
</dbReference>
<dbReference type="RefSeq" id="WP_011988831.1">
    <property type="nucleotide sequence ID" value="NC_009706.1"/>
</dbReference>
<dbReference type="SMR" id="A5N4S5"/>
<dbReference type="STRING" id="431943.CKL_0252"/>
<dbReference type="KEGG" id="ckl:CKL_0252"/>
<dbReference type="eggNOG" id="COG0202">
    <property type="taxonomic scope" value="Bacteria"/>
</dbReference>
<dbReference type="HOGENOM" id="CLU_053084_0_1_9"/>
<dbReference type="Proteomes" id="UP000002411">
    <property type="component" value="Chromosome"/>
</dbReference>
<dbReference type="GO" id="GO:0005737">
    <property type="term" value="C:cytoplasm"/>
    <property type="evidence" value="ECO:0007669"/>
    <property type="project" value="UniProtKB-ARBA"/>
</dbReference>
<dbReference type="GO" id="GO:0000428">
    <property type="term" value="C:DNA-directed RNA polymerase complex"/>
    <property type="evidence" value="ECO:0007669"/>
    <property type="project" value="UniProtKB-KW"/>
</dbReference>
<dbReference type="GO" id="GO:0003677">
    <property type="term" value="F:DNA binding"/>
    <property type="evidence" value="ECO:0007669"/>
    <property type="project" value="UniProtKB-UniRule"/>
</dbReference>
<dbReference type="GO" id="GO:0003899">
    <property type="term" value="F:DNA-directed RNA polymerase activity"/>
    <property type="evidence" value="ECO:0007669"/>
    <property type="project" value="UniProtKB-UniRule"/>
</dbReference>
<dbReference type="GO" id="GO:0046983">
    <property type="term" value="F:protein dimerization activity"/>
    <property type="evidence" value="ECO:0007669"/>
    <property type="project" value="InterPro"/>
</dbReference>
<dbReference type="GO" id="GO:0006351">
    <property type="term" value="P:DNA-templated transcription"/>
    <property type="evidence" value="ECO:0007669"/>
    <property type="project" value="UniProtKB-UniRule"/>
</dbReference>
<dbReference type="CDD" id="cd06928">
    <property type="entry name" value="RNAP_alpha_NTD"/>
    <property type="match status" value="1"/>
</dbReference>
<dbReference type="FunFam" id="1.10.150.20:FF:000001">
    <property type="entry name" value="DNA-directed RNA polymerase subunit alpha"/>
    <property type="match status" value="1"/>
</dbReference>
<dbReference type="FunFam" id="2.170.120.12:FF:000001">
    <property type="entry name" value="DNA-directed RNA polymerase subunit alpha"/>
    <property type="match status" value="1"/>
</dbReference>
<dbReference type="Gene3D" id="1.10.150.20">
    <property type="entry name" value="5' to 3' exonuclease, C-terminal subdomain"/>
    <property type="match status" value="1"/>
</dbReference>
<dbReference type="Gene3D" id="2.170.120.12">
    <property type="entry name" value="DNA-directed RNA polymerase, insert domain"/>
    <property type="match status" value="1"/>
</dbReference>
<dbReference type="Gene3D" id="3.30.1360.10">
    <property type="entry name" value="RNA polymerase, RBP11-like subunit"/>
    <property type="match status" value="1"/>
</dbReference>
<dbReference type="HAMAP" id="MF_00059">
    <property type="entry name" value="RNApol_bact_RpoA"/>
    <property type="match status" value="1"/>
</dbReference>
<dbReference type="InterPro" id="IPR011262">
    <property type="entry name" value="DNA-dir_RNA_pol_insert"/>
</dbReference>
<dbReference type="InterPro" id="IPR011263">
    <property type="entry name" value="DNA-dir_RNA_pol_RpoA/D/Rpb3"/>
</dbReference>
<dbReference type="InterPro" id="IPR011773">
    <property type="entry name" value="DNA-dir_RpoA"/>
</dbReference>
<dbReference type="InterPro" id="IPR036603">
    <property type="entry name" value="RBP11-like"/>
</dbReference>
<dbReference type="InterPro" id="IPR011260">
    <property type="entry name" value="RNAP_asu_C"/>
</dbReference>
<dbReference type="InterPro" id="IPR036643">
    <property type="entry name" value="RNApol_insert_sf"/>
</dbReference>
<dbReference type="NCBIfam" id="NF003513">
    <property type="entry name" value="PRK05182.1-2"/>
    <property type="match status" value="1"/>
</dbReference>
<dbReference type="NCBIfam" id="NF003515">
    <property type="entry name" value="PRK05182.2-1"/>
    <property type="match status" value="1"/>
</dbReference>
<dbReference type="NCBIfam" id="NF003516">
    <property type="entry name" value="PRK05182.2-2"/>
    <property type="match status" value="1"/>
</dbReference>
<dbReference type="NCBIfam" id="NF003519">
    <property type="entry name" value="PRK05182.2-5"/>
    <property type="match status" value="1"/>
</dbReference>
<dbReference type="NCBIfam" id="TIGR02027">
    <property type="entry name" value="rpoA"/>
    <property type="match status" value="1"/>
</dbReference>
<dbReference type="Pfam" id="PF01000">
    <property type="entry name" value="RNA_pol_A_bac"/>
    <property type="match status" value="1"/>
</dbReference>
<dbReference type="Pfam" id="PF03118">
    <property type="entry name" value="RNA_pol_A_CTD"/>
    <property type="match status" value="1"/>
</dbReference>
<dbReference type="Pfam" id="PF01193">
    <property type="entry name" value="RNA_pol_L"/>
    <property type="match status" value="1"/>
</dbReference>
<dbReference type="SMART" id="SM00662">
    <property type="entry name" value="RPOLD"/>
    <property type="match status" value="1"/>
</dbReference>
<dbReference type="SUPFAM" id="SSF47789">
    <property type="entry name" value="C-terminal domain of RNA polymerase alpha subunit"/>
    <property type="match status" value="1"/>
</dbReference>
<dbReference type="SUPFAM" id="SSF56553">
    <property type="entry name" value="Insert subdomain of RNA polymerase alpha subunit"/>
    <property type="match status" value="1"/>
</dbReference>
<dbReference type="SUPFAM" id="SSF55257">
    <property type="entry name" value="RBP11-like subunits of RNA polymerase"/>
    <property type="match status" value="1"/>
</dbReference>
<reference key="1">
    <citation type="journal article" date="2008" name="Proc. Natl. Acad. Sci. U.S.A.">
        <title>The genome of Clostridium kluyveri, a strict anaerobe with unique metabolic features.</title>
        <authorList>
            <person name="Seedorf H."/>
            <person name="Fricke W.F."/>
            <person name="Veith B."/>
            <person name="Brueggemann H."/>
            <person name="Liesegang H."/>
            <person name="Strittmatter A."/>
            <person name="Miethke M."/>
            <person name="Buckel W."/>
            <person name="Hinderberger J."/>
            <person name="Li F."/>
            <person name="Hagemeier C."/>
            <person name="Thauer R.K."/>
            <person name="Gottschalk G."/>
        </authorList>
    </citation>
    <scope>NUCLEOTIDE SEQUENCE [LARGE SCALE GENOMIC DNA]</scope>
    <source>
        <strain>ATCC 8527 / DSM 555 / NBRC 12016 / NCIMB 10680 / K1</strain>
    </source>
</reference>
<sequence>MLEIEKPKIECVETSEDGNYGKFVVEPLERGYGTTLGNALRRILLSSLPGVAASHVKIDGVLHEFSTVRGVKEDVSELILNIKELALKMNGDGTKTIYIDAQGPGEVVAGDIKTDGDVEIINGELHIATLDENSRLYMEITVNGGRGYVSQRRNKFEDMPIGTIPVDSIYTPIKRVNFNVENTRVGQITDYDKLSLEVWTNGTILPDEAVSLSAKILIEHFKLFMTLTDHANNVEIMVEKEEDKKEKVLEMAIEELDLSVRSYNCLKRAGINTVQELTERTMDDMMKVRNLGKKSLEEVEQKLDTLGLSLKQNED</sequence>
<accession>A5N4S5</accession>
<keyword id="KW-0240">DNA-directed RNA polymerase</keyword>
<keyword id="KW-0548">Nucleotidyltransferase</keyword>
<keyword id="KW-1185">Reference proteome</keyword>
<keyword id="KW-0804">Transcription</keyword>
<keyword id="KW-0808">Transferase</keyword>
<gene>
    <name evidence="1" type="primary">rpoA</name>
    <name type="ordered locus">CKL_0252</name>
</gene>